<name>GATC_ACAM1</name>
<protein>
    <recommendedName>
        <fullName evidence="1">Aspartyl/glutamyl-tRNA(Asn/Gln) amidotransferase subunit C</fullName>
        <shortName evidence="1">Asp/Glu-ADT subunit C</shortName>
        <ecNumber evidence="1">6.3.5.-</ecNumber>
    </recommendedName>
</protein>
<sequence>MLERAEVDKVAHLARLSLTDAESEQFTTQLGDILDYFEQLSELDVAEVEPTTRAIDVSNVTRVDHLTPYDDRESILACAPDQEDEYFKVPKIMGES</sequence>
<accession>B0BZ26</accession>
<dbReference type="EC" id="6.3.5.-" evidence="1"/>
<dbReference type="EMBL" id="CP000828">
    <property type="protein sequence ID" value="ABW28326.1"/>
    <property type="molecule type" value="Genomic_DNA"/>
</dbReference>
<dbReference type="RefSeq" id="WP_012163730.1">
    <property type="nucleotide sequence ID" value="NC_009925.1"/>
</dbReference>
<dbReference type="SMR" id="B0BZ26"/>
<dbReference type="STRING" id="329726.AM1_3332"/>
<dbReference type="KEGG" id="amr:AM1_3332"/>
<dbReference type="eggNOG" id="COG0721">
    <property type="taxonomic scope" value="Bacteria"/>
</dbReference>
<dbReference type="HOGENOM" id="CLU_105899_2_0_3"/>
<dbReference type="OrthoDB" id="9813938at2"/>
<dbReference type="Proteomes" id="UP000000268">
    <property type="component" value="Chromosome"/>
</dbReference>
<dbReference type="GO" id="GO:0050566">
    <property type="term" value="F:asparaginyl-tRNA synthase (glutamine-hydrolyzing) activity"/>
    <property type="evidence" value="ECO:0007669"/>
    <property type="project" value="RHEA"/>
</dbReference>
<dbReference type="GO" id="GO:0005524">
    <property type="term" value="F:ATP binding"/>
    <property type="evidence" value="ECO:0007669"/>
    <property type="project" value="UniProtKB-KW"/>
</dbReference>
<dbReference type="GO" id="GO:0050567">
    <property type="term" value="F:glutaminyl-tRNA synthase (glutamine-hydrolyzing) activity"/>
    <property type="evidence" value="ECO:0007669"/>
    <property type="project" value="UniProtKB-UniRule"/>
</dbReference>
<dbReference type="GO" id="GO:0070681">
    <property type="term" value="P:glutaminyl-tRNAGln biosynthesis via transamidation"/>
    <property type="evidence" value="ECO:0007669"/>
    <property type="project" value="TreeGrafter"/>
</dbReference>
<dbReference type="GO" id="GO:0006450">
    <property type="term" value="P:regulation of translational fidelity"/>
    <property type="evidence" value="ECO:0007669"/>
    <property type="project" value="InterPro"/>
</dbReference>
<dbReference type="GO" id="GO:0006412">
    <property type="term" value="P:translation"/>
    <property type="evidence" value="ECO:0007669"/>
    <property type="project" value="UniProtKB-UniRule"/>
</dbReference>
<dbReference type="Gene3D" id="1.10.20.60">
    <property type="entry name" value="Glu-tRNAGln amidotransferase C subunit, N-terminal domain"/>
    <property type="match status" value="1"/>
</dbReference>
<dbReference type="HAMAP" id="MF_00122">
    <property type="entry name" value="GatC"/>
    <property type="match status" value="1"/>
</dbReference>
<dbReference type="InterPro" id="IPR036113">
    <property type="entry name" value="Asp/Glu-ADT_sf_sub_c"/>
</dbReference>
<dbReference type="InterPro" id="IPR003837">
    <property type="entry name" value="GatC"/>
</dbReference>
<dbReference type="NCBIfam" id="TIGR00135">
    <property type="entry name" value="gatC"/>
    <property type="match status" value="1"/>
</dbReference>
<dbReference type="PANTHER" id="PTHR15004">
    <property type="entry name" value="GLUTAMYL-TRNA(GLN) AMIDOTRANSFERASE SUBUNIT C, MITOCHONDRIAL"/>
    <property type="match status" value="1"/>
</dbReference>
<dbReference type="PANTHER" id="PTHR15004:SF0">
    <property type="entry name" value="GLUTAMYL-TRNA(GLN) AMIDOTRANSFERASE SUBUNIT C, MITOCHONDRIAL"/>
    <property type="match status" value="1"/>
</dbReference>
<dbReference type="Pfam" id="PF02686">
    <property type="entry name" value="GatC"/>
    <property type="match status" value="1"/>
</dbReference>
<dbReference type="SUPFAM" id="SSF141000">
    <property type="entry name" value="Glu-tRNAGln amidotransferase C subunit"/>
    <property type="match status" value="1"/>
</dbReference>
<comment type="function">
    <text evidence="1">Allows the formation of correctly charged Asn-tRNA(Asn) or Gln-tRNA(Gln) through the transamidation of misacylated Asp-tRNA(Asn) or Glu-tRNA(Gln) in organisms which lack either or both of asparaginyl-tRNA or glutaminyl-tRNA synthetases. The reaction takes place in the presence of glutamine and ATP through an activated phospho-Asp-tRNA(Asn) or phospho-Glu-tRNA(Gln).</text>
</comment>
<comment type="catalytic activity">
    <reaction evidence="1">
        <text>L-glutamyl-tRNA(Gln) + L-glutamine + ATP + H2O = L-glutaminyl-tRNA(Gln) + L-glutamate + ADP + phosphate + H(+)</text>
        <dbReference type="Rhea" id="RHEA:17521"/>
        <dbReference type="Rhea" id="RHEA-COMP:9681"/>
        <dbReference type="Rhea" id="RHEA-COMP:9684"/>
        <dbReference type="ChEBI" id="CHEBI:15377"/>
        <dbReference type="ChEBI" id="CHEBI:15378"/>
        <dbReference type="ChEBI" id="CHEBI:29985"/>
        <dbReference type="ChEBI" id="CHEBI:30616"/>
        <dbReference type="ChEBI" id="CHEBI:43474"/>
        <dbReference type="ChEBI" id="CHEBI:58359"/>
        <dbReference type="ChEBI" id="CHEBI:78520"/>
        <dbReference type="ChEBI" id="CHEBI:78521"/>
        <dbReference type="ChEBI" id="CHEBI:456216"/>
    </reaction>
</comment>
<comment type="catalytic activity">
    <reaction evidence="1">
        <text>L-aspartyl-tRNA(Asn) + L-glutamine + ATP + H2O = L-asparaginyl-tRNA(Asn) + L-glutamate + ADP + phosphate + 2 H(+)</text>
        <dbReference type="Rhea" id="RHEA:14513"/>
        <dbReference type="Rhea" id="RHEA-COMP:9674"/>
        <dbReference type="Rhea" id="RHEA-COMP:9677"/>
        <dbReference type="ChEBI" id="CHEBI:15377"/>
        <dbReference type="ChEBI" id="CHEBI:15378"/>
        <dbReference type="ChEBI" id="CHEBI:29985"/>
        <dbReference type="ChEBI" id="CHEBI:30616"/>
        <dbReference type="ChEBI" id="CHEBI:43474"/>
        <dbReference type="ChEBI" id="CHEBI:58359"/>
        <dbReference type="ChEBI" id="CHEBI:78515"/>
        <dbReference type="ChEBI" id="CHEBI:78516"/>
        <dbReference type="ChEBI" id="CHEBI:456216"/>
    </reaction>
</comment>
<comment type="subunit">
    <text evidence="1">Heterotrimer of A, B and C subunits.</text>
</comment>
<comment type="similarity">
    <text evidence="1">Belongs to the GatC family.</text>
</comment>
<proteinExistence type="inferred from homology"/>
<gene>
    <name evidence="1" type="primary">gatC</name>
    <name type="ordered locus">AM1_3332</name>
</gene>
<keyword id="KW-0067">ATP-binding</keyword>
<keyword id="KW-0436">Ligase</keyword>
<keyword id="KW-0547">Nucleotide-binding</keyword>
<keyword id="KW-0648">Protein biosynthesis</keyword>
<keyword id="KW-1185">Reference proteome</keyword>
<organism>
    <name type="scientific">Acaryochloris marina (strain MBIC 11017)</name>
    <dbReference type="NCBI Taxonomy" id="329726"/>
    <lineage>
        <taxon>Bacteria</taxon>
        <taxon>Bacillati</taxon>
        <taxon>Cyanobacteriota</taxon>
        <taxon>Cyanophyceae</taxon>
        <taxon>Acaryochloridales</taxon>
        <taxon>Acaryochloridaceae</taxon>
        <taxon>Acaryochloris</taxon>
    </lineage>
</organism>
<reference key="1">
    <citation type="journal article" date="2008" name="Proc. Natl. Acad. Sci. U.S.A.">
        <title>Niche adaptation and genome expansion in the chlorophyll d-producing cyanobacterium Acaryochloris marina.</title>
        <authorList>
            <person name="Swingley W.D."/>
            <person name="Chen M."/>
            <person name="Cheung P.C."/>
            <person name="Conrad A.L."/>
            <person name="Dejesa L.C."/>
            <person name="Hao J."/>
            <person name="Honchak B.M."/>
            <person name="Karbach L.E."/>
            <person name="Kurdoglu A."/>
            <person name="Lahiri S."/>
            <person name="Mastrian S.D."/>
            <person name="Miyashita H."/>
            <person name="Page L."/>
            <person name="Ramakrishna P."/>
            <person name="Satoh S."/>
            <person name="Sattley W.M."/>
            <person name="Shimada Y."/>
            <person name="Taylor H.L."/>
            <person name="Tomo T."/>
            <person name="Tsuchiya T."/>
            <person name="Wang Z.T."/>
            <person name="Raymond J."/>
            <person name="Mimuro M."/>
            <person name="Blankenship R.E."/>
            <person name="Touchman J.W."/>
        </authorList>
    </citation>
    <scope>NUCLEOTIDE SEQUENCE [LARGE SCALE GENOMIC DNA]</scope>
    <source>
        <strain>MBIC 11017</strain>
    </source>
</reference>
<feature type="chain" id="PRO_1000076174" description="Aspartyl/glutamyl-tRNA(Asn/Gln) amidotransferase subunit C">
    <location>
        <begin position="1"/>
        <end position="96"/>
    </location>
</feature>
<evidence type="ECO:0000255" key="1">
    <source>
        <dbReference type="HAMAP-Rule" id="MF_00122"/>
    </source>
</evidence>